<feature type="chain" id="PRO_0000334413" description="Na(+)/H(+) antiporter NhaA">
    <location>
        <begin position="1"/>
        <end position="388"/>
    </location>
</feature>
<feature type="transmembrane region" description="Helical" evidence="1">
    <location>
        <begin position="14"/>
        <end position="34"/>
    </location>
</feature>
<feature type="transmembrane region" description="Helical" evidence="1">
    <location>
        <begin position="59"/>
        <end position="79"/>
    </location>
</feature>
<feature type="transmembrane region" description="Helical" evidence="1">
    <location>
        <begin position="95"/>
        <end position="115"/>
    </location>
</feature>
<feature type="transmembrane region" description="Helical" evidence="1">
    <location>
        <begin position="125"/>
        <end position="145"/>
    </location>
</feature>
<feature type="transmembrane region" description="Helical" evidence="1">
    <location>
        <begin position="154"/>
        <end position="174"/>
    </location>
</feature>
<feature type="transmembrane region" description="Helical" evidence="1">
    <location>
        <begin position="179"/>
        <end position="199"/>
    </location>
</feature>
<feature type="transmembrane region" description="Helical" evidence="1">
    <location>
        <begin position="219"/>
        <end position="239"/>
    </location>
</feature>
<feature type="transmembrane region" description="Helical" evidence="1">
    <location>
        <begin position="254"/>
        <end position="274"/>
    </location>
</feature>
<feature type="transmembrane region" description="Helical" evidence="1">
    <location>
        <begin position="292"/>
        <end position="312"/>
    </location>
</feature>
<feature type="transmembrane region" description="Helical" evidence="1">
    <location>
        <begin position="328"/>
        <end position="348"/>
    </location>
</feature>
<feature type="transmembrane region" description="Helical" evidence="1">
    <location>
        <begin position="360"/>
        <end position="380"/>
    </location>
</feature>
<proteinExistence type="inferred from homology"/>
<organism>
    <name type="scientific">Salmonella choleraesuis (strain SC-B67)</name>
    <dbReference type="NCBI Taxonomy" id="321314"/>
    <lineage>
        <taxon>Bacteria</taxon>
        <taxon>Pseudomonadati</taxon>
        <taxon>Pseudomonadota</taxon>
        <taxon>Gammaproteobacteria</taxon>
        <taxon>Enterobacterales</taxon>
        <taxon>Enterobacteriaceae</taxon>
        <taxon>Salmonella</taxon>
    </lineage>
</organism>
<protein>
    <recommendedName>
        <fullName evidence="1">Na(+)/H(+) antiporter NhaA</fullName>
    </recommendedName>
    <alternativeName>
        <fullName evidence="1">Sodium/proton antiporter NhaA</fullName>
    </alternativeName>
</protein>
<dbReference type="EMBL" id="AE017220">
    <property type="protein sequence ID" value="AAX63940.1"/>
    <property type="molecule type" value="Genomic_DNA"/>
</dbReference>
<dbReference type="RefSeq" id="WP_000681340.1">
    <property type="nucleotide sequence ID" value="NC_006905.1"/>
</dbReference>
<dbReference type="SMR" id="Q57TM1"/>
<dbReference type="KEGG" id="sec:SCH_0034"/>
<dbReference type="HOGENOM" id="CLU_015803_1_0_6"/>
<dbReference type="Proteomes" id="UP000000538">
    <property type="component" value="Chromosome"/>
</dbReference>
<dbReference type="GO" id="GO:0005886">
    <property type="term" value="C:plasma membrane"/>
    <property type="evidence" value="ECO:0007669"/>
    <property type="project" value="UniProtKB-SubCell"/>
</dbReference>
<dbReference type="GO" id="GO:0015385">
    <property type="term" value="F:sodium:proton antiporter activity"/>
    <property type="evidence" value="ECO:0007669"/>
    <property type="project" value="TreeGrafter"/>
</dbReference>
<dbReference type="GO" id="GO:0006885">
    <property type="term" value="P:regulation of pH"/>
    <property type="evidence" value="ECO:0007669"/>
    <property type="project" value="InterPro"/>
</dbReference>
<dbReference type="FunFam" id="1.20.1530.10:FF:000001">
    <property type="entry name" value="Na(+)/H(+) antiporter NhaA"/>
    <property type="match status" value="1"/>
</dbReference>
<dbReference type="Gene3D" id="1.20.1530.10">
    <property type="entry name" value="Na+/H+ antiporter like domain"/>
    <property type="match status" value="1"/>
</dbReference>
<dbReference type="HAMAP" id="MF_01844">
    <property type="entry name" value="NhaA"/>
    <property type="match status" value="1"/>
</dbReference>
<dbReference type="InterPro" id="IPR023171">
    <property type="entry name" value="Na/H_antiporter_dom_sf"/>
</dbReference>
<dbReference type="InterPro" id="IPR004670">
    <property type="entry name" value="NhaA"/>
</dbReference>
<dbReference type="NCBIfam" id="TIGR00773">
    <property type="entry name" value="NhaA"/>
    <property type="match status" value="1"/>
</dbReference>
<dbReference type="NCBIfam" id="NF007111">
    <property type="entry name" value="PRK09560.1"/>
    <property type="match status" value="1"/>
</dbReference>
<dbReference type="NCBIfam" id="NF007112">
    <property type="entry name" value="PRK09561.1"/>
    <property type="match status" value="1"/>
</dbReference>
<dbReference type="PANTHER" id="PTHR30341:SF0">
    <property type="entry name" value="NA(+)_H(+) ANTIPORTER NHAA"/>
    <property type="match status" value="1"/>
</dbReference>
<dbReference type="PANTHER" id="PTHR30341">
    <property type="entry name" value="SODIUM ION/PROTON ANTIPORTER NHAA-RELATED"/>
    <property type="match status" value="1"/>
</dbReference>
<dbReference type="Pfam" id="PF06965">
    <property type="entry name" value="Na_H_antiport_1"/>
    <property type="match status" value="1"/>
</dbReference>
<evidence type="ECO:0000255" key="1">
    <source>
        <dbReference type="HAMAP-Rule" id="MF_01844"/>
    </source>
</evidence>
<gene>
    <name evidence="1" type="primary">nhaA</name>
    <name type="ordered locus">SCH_0034</name>
</gene>
<name>NHAA_SALCH</name>
<keyword id="KW-0050">Antiport</keyword>
<keyword id="KW-0997">Cell inner membrane</keyword>
<keyword id="KW-1003">Cell membrane</keyword>
<keyword id="KW-0406">Ion transport</keyword>
<keyword id="KW-0472">Membrane</keyword>
<keyword id="KW-0915">Sodium</keyword>
<keyword id="KW-0739">Sodium transport</keyword>
<keyword id="KW-0812">Transmembrane</keyword>
<keyword id="KW-1133">Transmembrane helix</keyword>
<keyword id="KW-0813">Transport</keyword>
<sequence length="388" mass="41351">MKHLHRFFSSDASGGIILIIAAALAMLMANMGATSGWYHDFLETPVQLRVGALEINKNMLLWINDALMAVFFLLIGLEVKRELMQGSLASLRQAAFPVIAAIGGMIVPALLYLAFNYSDPVTREGWAIPAATDIAFALGVLALLGSRVPLALKIFLMALAIIDDLGAIVIIALFYTSDLSIVSLGVAAFAIAVLALLNLCGVRRTGVYILVGAVLWTAVLKSGVHATLAGVIVGFFIPLKEKHGRSPAKRLEHVLHPWVAYLILPLFAFANAGVSLQGVTIDGLTSMLPLGIIAGLLIGKPLGISLFCWLALRFKLAHLPQGTTYQQIMAVGILCGIGFTMSIFIASLAFGNVDPELINWAKLGILIGSLLSAVVGYSWLRARLNAPA</sequence>
<accession>Q57TM1</accession>
<reference key="1">
    <citation type="journal article" date="2005" name="Nucleic Acids Res.">
        <title>The genome sequence of Salmonella enterica serovar Choleraesuis, a highly invasive and resistant zoonotic pathogen.</title>
        <authorList>
            <person name="Chiu C.-H."/>
            <person name="Tang P."/>
            <person name="Chu C."/>
            <person name="Hu S."/>
            <person name="Bao Q."/>
            <person name="Yu J."/>
            <person name="Chou Y.-Y."/>
            <person name="Wang H.-S."/>
            <person name="Lee Y.-S."/>
        </authorList>
    </citation>
    <scope>NUCLEOTIDE SEQUENCE [LARGE SCALE GENOMIC DNA]</scope>
    <source>
        <strain>SC-B67</strain>
    </source>
</reference>
<comment type="function">
    <text evidence="1">Na(+)/H(+) antiporter that extrudes sodium in exchange for external protons.</text>
</comment>
<comment type="catalytic activity">
    <reaction evidence="1">
        <text>Na(+)(in) + 2 H(+)(out) = Na(+)(out) + 2 H(+)(in)</text>
        <dbReference type="Rhea" id="RHEA:29251"/>
        <dbReference type="ChEBI" id="CHEBI:15378"/>
        <dbReference type="ChEBI" id="CHEBI:29101"/>
    </reaction>
    <physiologicalReaction direction="left-to-right" evidence="1">
        <dbReference type="Rhea" id="RHEA:29252"/>
    </physiologicalReaction>
</comment>
<comment type="subcellular location">
    <subcellularLocation>
        <location evidence="1">Cell inner membrane</location>
        <topology evidence="1">Multi-pass membrane protein</topology>
    </subcellularLocation>
</comment>
<comment type="similarity">
    <text evidence="1">Belongs to the NhaA Na(+)/H(+) (TC 2.A.33) antiporter family.</text>
</comment>